<protein>
    <recommendedName>
        <fullName>B-lymphocyte antigen CD20</fullName>
    </recommendedName>
    <alternativeName>
        <fullName>Membrane-spanning 4-domains subfamily A member 1</fullName>
    </alternativeName>
    <cdAntigenName>CD20</cdAntigenName>
</protein>
<proteinExistence type="evidence at transcript level"/>
<organism>
    <name type="scientific">Canis lupus familiaris</name>
    <name type="common">Dog</name>
    <name type="synonym">Canis familiaris</name>
    <dbReference type="NCBI Taxonomy" id="9615"/>
    <lineage>
        <taxon>Eukaryota</taxon>
        <taxon>Metazoa</taxon>
        <taxon>Chordata</taxon>
        <taxon>Craniata</taxon>
        <taxon>Vertebrata</taxon>
        <taxon>Euteleostomi</taxon>
        <taxon>Mammalia</taxon>
        <taxon>Eutheria</taxon>
        <taxon>Laurasiatheria</taxon>
        <taxon>Carnivora</taxon>
        <taxon>Caniformia</taxon>
        <taxon>Canidae</taxon>
        <taxon>Canis</taxon>
    </lineage>
</organism>
<name>CD20_CANLF</name>
<keyword id="KW-0075">B-cell activation</keyword>
<keyword id="KW-1003">Cell membrane</keyword>
<keyword id="KW-0449">Lipoprotein</keyword>
<keyword id="KW-0472">Membrane</keyword>
<keyword id="KW-0564">Palmitate</keyword>
<keyword id="KW-0597">Phosphoprotein</keyword>
<keyword id="KW-1185">Reference proteome</keyword>
<keyword id="KW-0812">Transmembrane</keyword>
<keyword id="KW-1133">Transmembrane helix</keyword>
<gene>
    <name type="primary">MS4A1</name>
    <name type="synonym">CD20</name>
</gene>
<accession>Q3C2E2</accession>
<dbReference type="EMBL" id="AB210085">
    <property type="protein sequence ID" value="BAE47068.1"/>
    <property type="molecule type" value="mRNA"/>
</dbReference>
<dbReference type="RefSeq" id="NP_001041493.1">
    <property type="nucleotide sequence ID" value="NM_001048028.1"/>
</dbReference>
<dbReference type="SMR" id="Q3C2E2"/>
<dbReference type="FunCoup" id="Q3C2E2">
    <property type="interactions" value="71"/>
</dbReference>
<dbReference type="STRING" id="9615.ENSCAFP00000035044"/>
<dbReference type="PaxDb" id="9612-ENSCAFP00000035044"/>
<dbReference type="ABCD" id="Q3C2E2">
    <property type="antibodies" value="1 sequenced antibody"/>
</dbReference>
<dbReference type="GeneID" id="485430"/>
<dbReference type="KEGG" id="cfa:485430"/>
<dbReference type="CTD" id="931"/>
<dbReference type="eggNOG" id="ENOG502S6Z3">
    <property type="taxonomic scope" value="Eukaryota"/>
</dbReference>
<dbReference type="InParanoid" id="Q3C2E2"/>
<dbReference type="OrthoDB" id="9426701at2759"/>
<dbReference type="Proteomes" id="UP000002254">
    <property type="component" value="Unplaced"/>
</dbReference>
<dbReference type="Proteomes" id="UP000694429">
    <property type="component" value="Unplaced"/>
</dbReference>
<dbReference type="Proteomes" id="UP000694542">
    <property type="component" value="Unplaced"/>
</dbReference>
<dbReference type="Proteomes" id="UP000805418">
    <property type="component" value="Unplaced"/>
</dbReference>
<dbReference type="GO" id="GO:0009897">
    <property type="term" value="C:external side of plasma membrane"/>
    <property type="evidence" value="ECO:0000318"/>
    <property type="project" value="GO_Central"/>
</dbReference>
<dbReference type="GO" id="GO:0005886">
    <property type="term" value="C:plasma membrane"/>
    <property type="evidence" value="ECO:0000318"/>
    <property type="project" value="GO_Central"/>
</dbReference>
<dbReference type="GO" id="GO:0042113">
    <property type="term" value="P:B cell activation"/>
    <property type="evidence" value="ECO:0007669"/>
    <property type="project" value="UniProtKB-KW"/>
</dbReference>
<dbReference type="GO" id="GO:0007166">
    <property type="term" value="P:cell surface receptor signaling pathway"/>
    <property type="evidence" value="ECO:0000318"/>
    <property type="project" value="GO_Central"/>
</dbReference>
<dbReference type="InterPro" id="IPR007237">
    <property type="entry name" value="CD20-like"/>
</dbReference>
<dbReference type="InterPro" id="IPR030417">
    <property type="entry name" value="MS4A"/>
</dbReference>
<dbReference type="PANTHER" id="PTHR23320:SF79">
    <property type="entry name" value="B-LYMPHOCYTE ANTIGEN CD20"/>
    <property type="match status" value="1"/>
</dbReference>
<dbReference type="PANTHER" id="PTHR23320">
    <property type="entry name" value="MEMBRANE-SPANNING 4-DOMAINS SUBFAMILY A MS4A -RELATED"/>
    <property type="match status" value="1"/>
</dbReference>
<dbReference type="Pfam" id="PF04103">
    <property type="entry name" value="CD20"/>
    <property type="match status" value="1"/>
</dbReference>
<feature type="chain" id="PRO_0000158626" description="B-lymphocyte antigen CD20">
    <location>
        <begin position="1"/>
        <end position="297"/>
    </location>
</feature>
<feature type="topological domain" description="Cytoplasmic" evidence="4">
    <location>
        <begin position="1"/>
        <end position="51"/>
    </location>
</feature>
<feature type="transmembrane region" description="Helical" evidence="4">
    <location>
        <begin position="52"/>
        <end position="72"/>
    </location>
</feature>
<feature type="topological domain" description="Extracellular" evidence="4">
    <location>
        <begin position="73"/>
        <end position="75"/>
    </location>
</feature>
<feature type="transmembrane region" description="Helical" evidence="4">
    <location>
        <begin position="76"/>
        <end position="96"/>
    </location>
</feature>
<feature type="topological domain" description="Cytoplasmic" evidence="4">
    <location>
        <begin position="97"/>
        <end position="122"/>
    </location>
</feature>
<feature type="transmembrane region" description="Helical" evidence="4">
    <location>
        <begin position="123"/>
        <end position="143"/>
    </location>
</feature>
<feature type="topological domain" description="Extracellular" evidence="4">
    <location>
        <begin position="144"/>
        <end position="188"/>
    </location>
</feature>
<feature type="transmembrane region" description="Helical" evidence="4">
    <location>
        <begin position="189"/>
        <end position="209"/>
    </location>
</feature>
<feature type="topological domain" description="Cytoplasmic" evidence="4">
    <location>
        <begin position="210"/>
        <end position="297"/>
    </location>
</feature>
<feature type="region of interest" description="Disordered" evidence="5">
    <location>
        <begin position="274"/>
        <end position="297"/>
    </location>
</feature>
<feature type="compositionally biased region" description="Low complexity" evidence="5">
    <location>
        <begin position="281"/>
        <end position="290"/>
    </location>
</feature>
<feature type="modified residue" description="Phosphoserine" evidence="3">
    <location>
        <position position="36"/>
    </location>
</feature>
<feature type="modified residue" description="Phosphoserine" evidence="3">
    <location>
        <position position="225"/>
    </location>
</feature>
<feature type="lipid moiety-binding region" description="S-palmitoyl cysteine" evidence="1">
    <location>
        <position position="220"/>
    </location>
</feature>
<evidence type="ECO:0000250" key="1"/>
<evidence type="ECO:0000250" key="2">
    <source>
        <dbReference type="UniProtKB" id="P11836"/>
    </source>
</evidence>
<evidence type="ECO:0000250" key="3">
    <source>
        <dbReference type="UniProtKB" id="P19437"/>
    </source>
</evidence>
<evidence type="ECO:0000255" key="4"/>
<evidence type="ECO:0000256" key="5">
    <source>
        <dbReference type="SAM" id="MobiDB-lite"/>
    </source>
</evidence>
<evidence type="ECO:0000269" key="6">
    <source>
    </source>
</evidence>
<evidence type="ECO:0000305" key="7"/>
<sequence length="297" mass="33056">MTTPRNSMSGTLPVDPMKSPTAMYPVQKIIPKRMPSVVGPTQNFFMRESKTLGAVQIMNGLFHIALGSLLMIHTDVCAPICITMWYPLWGGIMFIISGSLLAAADKNPRKSLVKGKMIMNSLSLFAAISGIIFLIMDIFNITISHFFKMENLNLIKAPMPYVDIHNCDPANPSEKNSLSIQYCGSIRSVFLGVFAVMLIFAFFQKLVTAGIVENEWKKLCSKPKSDVVVLLAAEEKKEQPIETTEEMVELTEIASQPKKEEDIEIIPVQEEEGELEINFAEPPQEQESSPIENDSIP</sequence>
<reference key="1">
    <citation type="journal article" date="2005" name="Vet. Immunol. Immunopathol.">
        <title>Canine CD20 gene.</title>
        <authorList>
            <person name="Kano R."/>
            <person name="Inoue C."/>
            <person name="Okano H."/>
            <person name="Yamazaki J."/>
            <person name="Takahashi T."/>
            <person name="Watari T."/>
            <person name="Tokuriki M."/>
            <person name="Hasegawa A."/>
        </authorList>
    </citation>
    <scope>NUCLEOTIDE SEQUENCE [MRNA]</scope>
    <scope>TISSUE SPECIFICITY</scope>
</reference>
<comment type="function">
    <text evidence="2">B-lymphocyte-specific membrane protein that plays a role in the regulation of cellular calcium influx necessary for the development, differentiation, and activation of B-lymphocytes. Functions as a store-operated calcium (SOC) channel component promoting calcium influx after activation by the B-cell receptor/BCR.</text>
</comment>
<comment type="subunit">
    <text evidence="2">Forms homotetramers. Interacts with the heavy and light chains of cell surface IgM, the antigen-binding components of the BCR.</text>
</comment>
<comment type="subcellular location">
    <subcellularLocation>
        <location evidence="2">Cell membrane</location>
        <topology evidence="2">Multi-pass membrane protein</topology>
    </subcellularLocation>
    <subcellularLocation>
        <location evidence="2">Cell membrane</location>
        <topology evidence="2">Lipid-anchor</topology>
    </subcellularLocation>
    <text evidence="2">Constitutively associated with membrane rafts.</text>
</comment>
<comment type="tissue specificity">
    <text evidence="6">Expressed in PBMCs and lymph node from healthy dogs, in B-cells of canine lymphoma, but not in T-cell lymphoma cells and non-T and non-B-cell lymphoma cells.</text>
</comment>
<comment type="PTM">
    <text evidence="1">Phosphorylated. Might be functionally regulated by protein kinase(s) (By similarity).</text>
</comment>
<comment type="similarity">
    <text evidence="7">Belongs to the MS4A family.</text>
</comment>